<protein>
    <recommendedName>
        <fullName evidence="3">Conotoxin TeAr154</fullName>
    </recommendedName>
</protein>
<feature type="signal peptide" evidence="1">
    <location>
        <begin position="1"/>
        <end position="19"/>
    </location>
</feature>
<feature type="propeptide" id="PRO_0000274096" evidence="5">
    <location>
        <begin position="20"/>
        <end position="47"/>
    </location>
</feature>
<feature type="peptide" id="PRO_0000274097" description="Conotoxin TeAr154" evidence="2">
    <location>
        <begin position="50"/>
        <end position="61"/>
    </location>
</feature>
<feature type="modified residue" description="4-carboxyglutamate" evidence="2">
    <location>
        <position position="57"/>
    </location>
</feature>
<sequence>MHCLPVFVILLLLTASGLSVDARPKTEDDVPLSSFRDNTKSTLQRLLKRVNCCPIDESCCS</sequence>
<organism>
    <name type="scientific">Conus textile</name>
    <name type="common">Cloth-of-gold cone</name>
    <dbReference type="NCBI Taxonomy" id="6494"/>
    <lineage>
        <taxon>Eukaryota</taxon>
        <taxon>Metazoa</taxon>
        <taxon>Spiralia</taxon>
        <taxon>Lophotrochozoa</taxon>
        <taxon>Mollusca</taxon>
        <taxon>Gastropoda</taxon>
        <taxon>Caenogastropoda</taxon>
        <taxon>Neogastropoda</taxon>
        <taxon>Conoidea</taxon>
        <taxon>Conidae</taxon>
        <taxon>Conus</taxon>
        <taxon>Cylinder</taxon>
    </lineage>
</organism>
<comment type="subcellular location">
    <subcellularLocation>
        <location evidence="2">Secreted</location>
    </subcellularLocation>
</comment>
<comment type="tissue specificity">
    <text evidence="5">Expressed by the venom duct.</text>
</comment>
<comment type="domain">
    <text evidence="4">The cysteine framework is V (CC-CC).</text>
</comment>
<comment type="PTM">
    <text evidence="4">Contains 2 disulfide bonds that can be either 'C1-C3, C2-C4' or 'C1-C4, C2-C3', since these disulfide connectivities have been observed for conotoxins with cysteine framework V (for examples, see AC P0DQQ7 and AC P81755).</text>
</comment>
<comment type="PTM">
    <text evidence="2">Contains 2 disulfide bonds.</text>
</comment>
<comment type="mass spectrometry"/>
<comment type="similarity">
    <text evidence="4">Belongs to the conotoxin T superfamily.</text>
</comment>
<dbReference type="EMBL" id="DQ141165">
    <property type="protein sequence ID" value="AAZ85412.1"/>
    <property type="molecule type" value="mRNA"/>
</dbReference>
<dbReference type="ConoServer" id="1683">
    <property type="toxin name" value="TeAr154 precursor"/>
</dbReference>
<dbReference type="GO" id="GO:0005576">
    <property type="term" value="C:extracellular region"/>
    <property type="evidence" value="ECO:0007669"/>
    <property type="project" value="UniProtKB-SubCell"/>
</dbReference>
<dbReference type="GO" id="GO:0090729">
    <property type="term" value="F:toxin activity"/>
    <property type="evidence" value="ECO:0007669"/>
    <property type="project" value="UniProtKB-KW"/>
</dbReference>
<dbReference type="InterPro" id="IPR031565">
    <property type="entry name" value="T-conotoxin"/>
</dbReference>
<dbReference type="Pfam" id="PF16981">
    <property type="entry name" value="Chi-conotoxin"/>
    <property type="match status" value="1"/>
</dbReference>
<accession>Q3YEE8</accession>
<evidence type="ECO:0000255" key="1"/>
<evidence type="ECO:0000269" key="2">
    <source>
    </source>
</evidence>
<evidence type="ECO:0000303" key="3">
    <source>
    </source>
</evidence>
<evidence type="ECO:0000305" key="4"/>
<evidence type="ECO:0000305" key="5">
    <source>
    </source>
</evidence>
<name>CT54A_CONTE</name>
<reference key="1">
    <citation type="journal article" date="2006" name="Peptides">
        <title>Direct cDNA cloning of novel conotoxins of the T-superfamily from Conus textile.</title>
        <authorList>
            <person name="Luo S."/>
            <person name="Zhangsun D."/>
            <person name="Zhang B."/>
            <person name="Chen X."/>
            <person name="Feng J."/>
        </authorList>
    </citation>
    <scope>NUCLEOTIDE SEQUENCE [MRNA]</scope>
    <source>
        <tissue>Venom duct</tissue>
    </source>
</reference>
<reference key="2">
    <citation type="journal article" date="2009" name="Proc. Natl. Acad. Sci. U.S.A.">
        <title>Rapid sensitive analysis of cysteine rich peptide venom components.</title>
        <authorList>
            <person name="Ueberheide B.M."/>
            <person name="Fenyo D."/>
            <person name="Alewood P.F."/>
            <person name="Chait B.T."/>
        </authorList>
    </citation>
    <scope>PROTEIN SEQUENCE OF 50-61</scope>
    <scope>SUBCELLULAR LOCATION</scope>
    <scope>MASS SPECTROMETRY</scope>
    <scope>GAMMA-CARBOXYGLUTAMATION AT GLU-57</scope>
    <source>
        <tissue>Venom</tissue>
    </source>
</reference>
<reference key="3">
    <citation type="journal article" date="2012" name="J. Proteome Res.">
        <title>Constrained de novo sequencing of conotoxins.</title>
        <authorList>
            <person name="Bhatia S."/>
            <person name="Kil Y.J."/>
            <person name="Ueberheide B."/>
            <person name="Chait B.T."/>
            <person name="Tayo L."/>
            <person name="Cruz L."/>
            <person name="Lu B."/>
            <person name="Yates J.R. III"/>
            <person name="Bern M."/>
        </authorList>
    </citation>
    <scope>IDENTIFICATION BY MASS SPECTROMETRY</scope>
    <scope>SUBCELLULAR LOCATION</scope>
    <source>
        <tissue>Venom</tissue>
    </source>
</reference>
<proteinExistence type="evidence at protein level"/>
<keyword id="KW-0165">Cleavage on pair of basic residues</keyword>
<keyword id="KW-0903">Direct protein sequencing</keyword>
<keyword id="KW-1015">Disulfide bond</keyword>
<keyword id="KW-0301">Gamma-carboxyglutamic acid</keyword>
<keyword id="KW-0964">Secreted</keyword>
<keyword id="KW-0732">Signal</keyword>
<keyword id="KW-0800">Toxin</keyword>